<evidence type="ECO:0000250" key="1"/>
<evidence type="ECO:0000255" key="2">
    <source>
        <dbReference type="PROSITE-ProRule" id="PRU00441"/>
    </source>
</evidence>
<evidence type="ECO:0000305" key="3"/>
<proteinExistence type="inferred from homology"/>
<name>ARTM_HAEIN</name>
<keyword id="KW-0029">Amino-acid transport</keyword>
<keyword id="KW-0997">Cell inner membrane</keyword>
<keyword id="KW-1003">Cell membrane</keyword>
<keyword id="KW-0472">Membrane</keyword>
<keyword id="KW-1185">Reference proteome</keyword>
<keyword id="KW-0812">Transmembrane</keyword>
<keyword id="KW-1133">Transmembrane helix</keyword>
<keyword id="KW-0813">Transport</keyword>
<dbReference type="EMBL" id="L42023">
    <property type="protein sequence ID" value="AAC22828.1"/>
    <property type="molecule type" value="Genomic_DNA"/>
</dbReference>
<dbReference type="EMBL" id="U17295">
    <property type="protein sequence ID" value="AAA95980.1"/>
    <property type="molecule type" value="Genomic_DNA"/>
</dbReference>
<dbReference type="PIR" id="A64188">
    <property type="entry name" value="A64188"/>
</dbReference>
<dbReference type="RefSeq" id="NP_439333.1">
    <property type="nucleotide sequence ID" value="NC_000907.1"/>
</dbReference>
<dbReference type="SMR" id="P45089"/>
<dbReference type="STRING" id="71421.HI_1177"/>
<dbReference type="EnsemblBacteria" id="AAC22828">
    <property type="protein sequence ID" value="AAC22828"/>
    <property type="gene ID" value="HI_1177"/>
</dbReference>
<dbReference type="KEGG" id="hin:HI_1177"/>
<dbReference type="PATRIC" id="fig|71421.8.peg.1228"/>
<dbReference type="eggNOG" id="COG4160">
    <property type="taxonomic scope" value="Bacteria"/>
</dbReference>
<dbReference type="HOGENOM" id="CLU_019602_1_4_6"/>
<dbReference type="OrthoDB" id="4404959at2"/>
<dbReference type="PhylomeDB" id="P45089"/>
<dbReference type="BioCyc" id="HINF71421:G1GJ1-1209-MONOMER"/>
<dbReference type="Proteomes" id="UP000000579">
    <property type="component" value="Chromosome"/>
</dbReference>
<dbReference type="GO" id="GO:0043190">
    <property type="term" value="C:ATP-binding cassette (ABC) transporter complex"/>
    <property type="evidence" value="ECO:0007669"/>
    <property type="project" value="InterPro"/>
</dbReference>
<dbReference type="GO" id="GO:0005886">
    <property type="term" value="C:plasma membrane"/>
    <property type="evidence" value="ECO:0000318"/>
    <property type="project" value="GO_Central"/>
</dbReference>
<dbReference type="GO" id="GO:0022857">
    <property type="term" value="F:transmembrane transporter activity"/>
    <property type="evidence" value="ECO:0007669"/>
    <property type="project" value="InterPro"/>
</dbReference>
<dbReference type="GO" id="GO:0006865">
    <property type="term" value="P:amino acid transport"/>
    <property type="evidence" value="ECO:0000318"/>
    <property type="project" value="GO_Central"/>
</dbReference>
<dbReference type="CDD" id="cd06261">
    <property type="entry name" value="TM_PBP2"/>
    <property type="match status" value="1"/>
</dbReference>
<dbReference type="FunFam" id="1.10.3720.10:FF:000017">
    <property type="entry name" value="Arginine ABC transporter permease protein ArtM"/>
    <property type="match status" value="1"/>
</dbReference>
<dbReference type="Gene3D" id="1.10.3720.10">
    <property type="entry name" value="MetI-like"/>
    <property type="match status" value="1"/>
</dbReference>
<dbReference type="InterPro" id="IPR010065">
    <property type="entry name" value="AA_ABC_transptr_permease_3TM"/>
</dbReference>
<dbReference type="InterPro" id="IPR043429">
    <property type="entry name" value="ArtM/GltK/GlnP/TcyL/YhdX-like"/>
</dbReference>
<dbReference type="InterPro" id="IPR000515">
    <property type="entry name" value="MetI-like"/>
</dbReference>
<dbReference type="InterPro" id="IPR035906">
    <property type="entry name" value="MetI-like_sf"/>
</dbReference>
<dbReference type="NCBIfam" id="TIGR01726">
    <property type="entry name" value="HEQRo_perm_3TM"/>
    <property type="match status" value="1"/>
</dbReference>
<dbReference type="NCBIfam" id="NF008336">
    <property type="entry name" value="PRK11122.1"/>
    <property type="match status" value="1"/>
</dbReference>
<dbReference type="PANTHER" id="PTHR30614:SF10">
    <property type="entry name" value="ARGININE ABC TRANSPORTER PERMEASE PROTEIN ARTM"/>
    <property type="match status" value="1"/>
</dbReference>
<dbReference type="PANTHER" id="PTHR30614">
    <property type="entry name" value="MEMBRANE COMPONENT OF AMINO ACID ABC TRANSPORTER"/>
    <property type="match status" value="1"/>
</dbReference>
<dbReference type="Pfam" id="PF00528">
    <property type="entry name" value="BPD_transp_1"/>
    <property type="match status" value="1"/>
</dbReference>
<dbReference type="SUPFAM" id="SSF161098">
    <property type="entry name" value="MetI-like"/>
    <property type="match status" value="1"/>
</dbReference>
<dbReference type="PROSITE" id="PS50928">
    <property type="entry name" value="ABC_TM1"/>
    <property type="match status" value="1"/>
</dbReference>
<reference key="1">
    <citation type="journal article" date="1995" name="Science">
        <title>Whole-genome random sequencing and assembly of Haemophilus influenzae Rd.</title>
        <authorList>
            <person name="Fleischmann R.D."/>
            <person name="Adams M.D."/>
            <person name="White O."/>
            <person name="Clayton R.A."/>
            <person name="Kirkness E.F."/>
            <person name="Kerlavage A.R."/>
            <person name="Bult C.J."/>
            <person name="Tomb J.-F."/>
            <person name="Dougherty B.A."/>
            <person name="Merrick J.M."/>
            <person name="McKenney K."/>
            <person name="Sutton G.G."/>
            <person name="FitzHugh W."/>
            <person name="Fields C.A."/>
            <person name="Gocayne J.D."/>
            <person name="Scott J.D."/>
            <person name="Shirley R."/>
            <person name="Liu L.-I."/>
            <person name="Glodek A."/>
            <person name="Kelley J.M."/>
            <person name="Weidman J.F."/>
            <person name="Phillips C.A."/>
            <person name="Spriggs T."/>
            <person name="Hedblom E."/>
            <person name="Cotton M.D."/>
            <person name="Utterback T.R."/>
            <person name="Hanna M.C."/>
            <person name="Nguyen D.T."/>
            <person name="Saudek D.M."/>
            <person name="Brandon R.C."/>
            <person name="Fine L.D."/>
            <person name="Fritchman J.L."/>
            <person name="Fuhrmann J.L."/>
            <person name="Geoghagen N.S.M."/>
            <person name="Gnehm C.L."/>
            <person name="McDonald L.A."/>
            <person name="Small K.V."/>
            <person name="Fraser C.M."/>
            <person name="Smith H.O."/>
            <person name="Venter J.C."/>
        </authorList>
    </citation>
    <scope>NUCLEOTIDE SEQUENCE [LARGE SCALE GENOMIC DNA]</scope>
    <source>
        <strain>ATCC 51907 / DSM 11121 / KW20 / Rd</strain>
    </source>
</reference>
<reference key="2">
    <citation type="journal article" date="1996" name="J. Bacteriol.">
        <title>Altered lipopolysaccharide characteristic of the I69 phenotype in Haemophilus influenzae results from mutations in a novel gene, isn.</title>
        <authorList>
            <person name="Preston A."/>
            <person name="Maskell D."/>
            <person name="Johnson A."/>
            <person name="Moxon E.R."/>
        </authorList>
    </citation>
    <scope>NUCLEOTIDE SEQUENCE [GENOMIC DNA]</scope>
    <source>
        <strain>ATCC 51907 / DSM 11121 / KW20 / Rd</strain>
    </source>
</reference>
<gene>
    <name type="primary">artM</name>
    <name type="ordered locus">HI_1177</name>
</gene>
<comment type="function">
    <text evidence="1">Part of the ABC transporter complex ArtPIQM involved in arginine transport. Probably responsible for the translocation of the substrate across the membrane (By similarity).</text>
</comment>
<comment type="subunit">
    <text evidence="1">The complex is composed of two ATP-binding proteins (ArtP), two transmembrane proteins (ArtM and ArtQ) and a solute-binding protein (ArtI).</text>
</comment>
<comment type="subcellular location">
    <subcellularLocation>
        <location evidence="3">Cell inner membrane</location>
        <topology evidence="2">Multi-pass membrane protein</topology>
    </subcellularLocation>
</comment>
<comment type="similarity">
    <text evidence="3">Belongs to the binding-protein-dependent transport system permease family. HisMQ subfamily.</text>
</comment>
<organism>
    <name type="scientific">Haemophilus influenzae (strain ATCC 51907 / DSM 11121 / KW20 / Rd)</name>
    <dbReference type="NCBI Taxonomy" id="71421"/>
    <lineage>
        <taxon>Bacteria</taxon>
        <taxon>Pseudomonadati</taxon>
        <taxon>Pseudomonadota</taxon>
        <taxon>Gammaproteobacteria</taxon>
        <taxon>Pasteurellales</taxon>
        <taxon>Pasteurellaceae</taxon>
        <taxon>Haemophilus</taxon>
    </lineage>
</organism>
<accession>P45089</accession>
<protein>
    <recommendedName>
        <fullName>Arginine ABC transporter permease protein ArtM</fullName>
    </recommendedName>
</protein>
<sequence length="227" mass="25213">MFQEYLSVIVKGIPTSLLLTVVSLLIAFFLALFLTFLLSMENKWIKSAVNLYLTLFTGTPLLVQFFLIYAGPGQFQWIIDSPLWYVLSNAWFCAALALALNSAAYSTQLFHGAVKAIPKGQWESCGALGLNRIQTLKILIPYALKRALPSYSNEIILVFKGTALASTITIMDIMGYARQLYGTEYDALTIYGIAGGIYLIITGIATLLLRKLEKKVLAFERFEVSKA</sequence>
<feature type="chain" id="PRO_0000059964" description="Arginine ABC transporter permease protein ArtM">
    <location>
        <begin position="1"/>
        <end position="227"/>
    </location>
</feature>
<feature type="transmembrane region" description="Helical" evidence="2">
    <location>
        <begin position="17"/>
        <end position="37"/>
    </location>
</feature>
<feature type="transmembrane region" description="Helical" evidence="2">
    <location>
        <begin position="51"/>
        <end position="71"/>
    </location>
</feature>
<feature type="transmembrane region" description="Helical" evidence="2">
    <location>
        <begin position="78"/>
        <end position="98"/>
    </location>
</feature>
<feature type="transmembrane region" description="Helical" evidence="2">
    <location>
        <begin position="155"/>
        <end position="175"/>
    </location>
</feature>
<feature type="transmembrane region" description="Helical" evidence="2">
    <location>
        <begin position="188"/>
        <end position="208"/>
    </location>
</feature>
<feature type="domain" description="ABC transmembrane type-1" evidence="2">
    <location>
        <begin position="13"/>
        <end position="209"/>
    </location>
</feature>
<feature type="sequence conflict" description="In Ref. 2; AAA95980." evidence="3" ref="2">
    <original>A</original>
    <variation>R</variation>
    <location>
        <position position="99"/>
    </location>
</feature>